<keyword id="KW-0560">Oxidoreductase</keyword>
<keyword id="KW-0670">Pyruvate</keyword>
<keyword id="KW-1185">Reference proteome</keyword>
<keyword id="KW-0786">Thiamine pyrophosphate</keyword>
<reference key="1">
    <citation type="journal article" date="2005" name="J. Bacteriol.">
        <title>Insights on evolution of virulence and resistance from the complete genome analysis of an early methicillin-resistant Staphylococcus aureus strain and a biofilm-producing methicillin-resistant Staphylococcus epidermidis strain.</title>
        <authorList>
            <person name="Gill S.R."/>
            <person name="Fouts D.E."/>
            <person name="Archer G.L."/>
            <person name="Mongodin E.F."/>
            <person name="DeBoy R.T."/>
            <person name="Ravel J."/>
            <person name="Paulsen I.T."/>
            <person name="Kolonay J.F."/>
            <person name="Brinkac L.M."/>
            <person name="Beanan M.J."/>
            <person name="Dodson R.J."/>
            <person name="Daugherty S.C."/>
            <person name="Madupu R."/>
            <person name="Angiuoli S.V."/>
            <person name="Durkin A.S."/>
            <person name="Haft D.H."/>
            <person name="Vamathevan J.J."/>
            <person name="Khouri H."/>
            <person name="Utterback T.R."/>
            <person name="Lee C."/>
            <person name="Dimitrov G."/>
            <person name="Jiang L."/>
            <person name="Qin H."/>
            <person name="Weidman J."/>
            <person name="Tran K."/>
            <person name="Kang K.H."/>
            <person name="Hance I.R."/>
            <person name="Nelson K.E."/>
            <person name="Fraser C.M."/>
        </authorList>
    </citation>
    <scope>NUCLEOTIDE SEQUENCE [LARGE SCALE GENOMIC DNA]</scope>
    <source>
        <strain>ATCC 35984 / DSM 28319 / BCRC 17069 / CCUG 31568 / BM 3577 / RP62A</strain>
    </source>
</reference>
<comment type="function">
    <text evidence="1">The pyruvate dehydrogenase complex catalyzes the overall conversion of pyruvate to acetyl-CoA and CO(2). It contains multiple copies of three enzymatic components: pyruvate dehydrogenase (E1), dihydrolipoamide acetyltransferase (E2) and lipoamide dehydrogenase (E3) (By similarity).</text>
</comment>
<comment type="catalytic activity">
    <reaction>
        <text>N(6)-[(R)-lipoyl]-L-lysyl-[protein] + pyruvate + H(+) = N(6)-[(R)-S(8)-acetyldihydrolipoyl]-L-lysyl-[protein] + CO2</text>
        <dbReference type="Rhea" id="RHEA:19189"/>
        <dbReference type="Rhea" id="RHEA-COMP:10474"/>
        <dbReference type="Rhea" id="RHEA-COMP:10478"/>
        <dbReference type="ChEBI" id="CHEBI:15361"/>
        <dbReference type="ChEBI" id="CHEBI:15378"/>
        <dbReference type="ChEBI" id="CHEBI:16526"/>
        <dbReference type="ChEBI" id="CHEBI:83099"/>
        <dbReference type="ChEBI" id="CHEBI:83111"/>
        <dbReference type="EC" id="1.2.4.1"/>
    </reaction>
</comment>
<comment type="cofactor">
    <cofactor evidence="1">
        <name>thiamine diphosphate</name>
        <dbReference type="ChEBI" id="CHEBI:58937"/>
    </cofactor>
</comment>
<comment type="subunit">
    <text>Heterodimer of an alpha and a beta chain.</text>
</comment>
<sequence length="370" mass="41330">MAPKLQAQFDAVKVLNETQSKFEMVQILDEDGNVVNEDLVPDLTDEQLVELMERMVWTRILDQRSISLNRQGRLGFYAPTAGQEASQLASQYALESEDFILPGYRDVPQIIWHGLPLTDAFLFSRGHFKGNQFPEGVNALSPQIIIGAQYIQTAGVAFGLKKRGKNAVAITYTGDGGSSQGDFYEGINFASAYKAPAIFVIQNNNYAISTPRSKQTAAETLAQKAISVGIPGIQVDGMDALAVYQATLEARERAVAGEGPTVIETLTYRYGPHTMAGDDPTRYRTSDEDAEWEKKDPLVRFRKYLEAKGLWNEDKENEVVERAKSEIKAAIKEADNTEKQTVTSLMDIMYEEMPQNLAEQYEIYKEKESK</sequence>
<organism>
    <name type="scientific">Staphylococcus epidermidis (strain ATCC 35984 / DSM 28319 / BCRC 17069 / CCUG 31568 / BM 3577 / RP62A)</name>
    <dbReference type="NCBI Taxonomy" id="176279"/>
    <lineage>
        <taxon>Bacteria</taxon>
        <taxon>Bacillati</taxon>
        <taxon>Bacillota</taxon>
        <taxon>Bacilli</taxon>
        <taxon>Bacillales</taxon>
        <taxon>Staphylococcaceae</taxon>
        <taxon>Staphylococcus</taxon>
    </lineage>
</organism>
<evidence type="ECO:0000250" key="1"/>
<feature type="chain" id="PRO_0000162212" description="Pyruvate dehydrogenase E1 component subunit alpha">
    <location>
        <begin position="1"/>
        <end position="370"/>
    </location>
</feature>
<dbReference type="EC" id="1.2.4.1"/>
<dbReference type="EMBL" id="CP000029">
    <property type="protein sequence ID" value="AAW54052.1"/>
    <property type="molecule type" value="Genomic_DNA"/>
</dbReference>
<dbReference type="RefSeq" id="WP_001831653.1">
    <property type="nucleotide sequence ID" value="NC_002976.3"/>
</dbReference>
<dbReference type="SMR" id="Q5HQ76"/>
<dbReference type="STRING" id="176279.SERP0680"/>
<dbReference type="GeneID" id="50019070"/>
<dbReference type="KEGG" id="ser:SERP0680"/>
<dbReference type="eggNOG" id="COG1071">
    <property type="taxonomic scope" value="Bacteria"/>
</dbReference>
<dbReference type="HOGENOM" id="CLU_029393_1_0_9"/>
<dbReference type="Proteomes" id="UP000000531">
    <property type="component" value="Chromosome"/>
</dbReference>
<dbReference type="GO" id="GO:0004739">
    <property type="term" value="F:pyruvate dehydrogenase (acetyl-transferring) activity"/>
    <property type="evidence" value="ECO:0007669"/>
    <property type="project" value="UniProtKB-EC"/>
</dbReference>
<dbReference type="GO" id="GO:0009083">
    <property type="term" value="P:branched-chain amino acid catabolic process"/>
    <property type="evidence" value="ECO:0007669"/>
    <property type="project" value="TreeGrafter"/>
</dbReference>
<dbReference type="CDD" id="cd02000">
    <property type="entry name" value="TPP_E1_PDC_ADC_BCADC"/>
    <property type="match status" value="1"/>
</dbReference>
<dbReference type="FunFam" id="3.40.50.970:FF:000023">
    <property type="entry name" value="Pyruvate dehydrogenase E1 component subunit alpha"/>
    <property type="match status" value="1"/>
</dbReference>
<dbReference type="Gene3D" id="3.40.50.970">
    <property type="match status" value="1"/>
</dbReference>
<dbReference type="InterPro" id="IPR050771">
    <property type="entry name" value="Alpha-ketoacid_DH_E1_comp"/>
</dbReference>
<dbReference type="InterPro" id="IPR001017">
    <property type="entry name" value="DH_E1"/>
</dbReference>
<dbReference type="InterPro" id="IPR017596">
    <property type="entry name" value="PdhA/BkdA"/>
</dbReference>
<dbReference type="InterPro" id="IPR029061">
    <property type="entry name" value="THDP-binding"/>
</dbReference>
<dbReference type="NCBIfam" id="TIGR03181">
    <property type="entry name" value="PDH_E1_alph_x"/>
    <property type="match status" value="1"/>
</dbReference>
<dbReference type="PANTHER" id="PTHR43380">
    <property type="entry name" value="2-OXOISOVALERATE DEHYDROGENASE SUBUNIT ALPHA, MITOCHONDRIAL"/>
    <property type="match status" value="1"/>
</dbReference>
<dbReference type="PANTHER" id="PTHR43380:SF1">
    <property type="entry name" value="2-OXOISOVALERATE DEHYDROGENASE SUBUNIT ALPHA, MITOCHONDRIAL"/>
    <property type="match status" value="1"/>
</dbReference>
<dbReference type="Pfam" id="PF00676">
    <property type="entry name" value="E1_dh"/>
    <property type="match status" value="1"/>
</dbReference>
<dbReference type="SUPFAM" id="SSF52518">
    <property type="entry name" value="Thiamin diphosphate-binding fold (THDP-binding)"/>
    <property type="match status" value="1"/>
</dbReference>
<proteinExistence type="inferred from homology"/>
<name>ODPA_STAEQ</name>
<protein>
    <recommendedName>
        <fullName>Pyruvate dehydrogenase E1 component subunit alpha</fullName>
        <ecNumber>1.2.4.1</ecNumber>
    </recommendedName>
</protein>
<accession>Q5HQ76</accession>
<gene>
    <name type="primary">pdhA</name>
    <name type="ordered locus">SERP0680</name>
</gene>